<proteinExistence type="inferred from homology"/>
<protein>
    <recommendedName>
        <fullName evidence="1">Methylthioribose kinase</fullName>
        <shortName evidence="1">MTR kinase</shortName>
        <ecNumber evidence="1">2.7.1.100</ecNumber>
    </recommendedName>
</protein>
<evidence type="ECO:0000255" key="1">
    <source>
        <dbReference type="HAMAP-Rule" id="MF_01683"/>
    </source>
</evidence>
<accession>A8FCG6</accession>
<dbReference type="EC" id="2.7.1.100" evidence="1"/>
<dbReference type="EMBL" id="CP000813">
    <property type="protein sequence ID" value="ABV61933.1"/>
    <property type="molecule type" value="Genomic_DNA"/>
</dbReference>
<dbReference type="RefSeq" id="WP_012009733.1">
    <property type="nucleotide sequence ID" value="NC_009848.4"/>
</dbReference>
<dbReference type="SMR" id="A8FCG6"/>
<dbReference type="STRING" id="315750.BPUM_1250"/>
<dbReference type="GeneID" id="5620513"/>
<dbReference type="KEGG" id="bpu:BPUM_1250"/>
<dbReference type="eggNOG" id="COG4857">
    <property type="taxonomic scope" value="Bacteria"/>
</dbReference>
<dbReference type="HOGENOM" id="CLU_033681_0_0_9"/>
<dbReference type="OrthoDB" id="9777791at2"/>
<dbReference type="UniPathway" id="UPA00904">
    <property type="reaction ID" value="UER00872"/>
</dbReference>
<dbReference type="Proteomes" id="UP000001355">
    <property type="component" value="Chromosome"/>
</dbReference>
<dbReference type="GO" id="GO:0005524">
    <property type="term" value="F:ATP binding"/>
    <property type="evidence" value="ECO:0007669"/>
    <property type="project" value="UniProtKB-UniRule"/>
</dbReference>
<dbReference type="GO" id="GO:0046522">
    <property type="term" value="F:S-methyl-5-thioribose kinase activity"/>
    <property type="evidence" value="ECO:0007669"/>
    <property type="project" value="UniProtKB-UniRule"/>
</dbReference>
<dbReference type="GO" id="GO:0019509">
    <property type="term" value="P:L-methionine salvage from methylthioadenosine"/>
    <property type="evidence" value="ECO:0007669"/>
    <property type="project" value="UniProtKB-UniRule"/>
</dbReference>
<dbReference type="Gene3D" id="3.90.1200.10">
    <property type="match status" value="1"/>
</dbReference>
<dbReference type="Gene3D" id="3.30.200.20">
    <property type="entry name" value="Phosphorylase Kinase, domain 1"/>
    <property type="match status" value="1"/>
</dbReference>
<dbReference type="HAMAP" id="MF_01683">
    <property type="entry name" value="Salvage_MtnK"/>
    <property type="match status" value="1"/>
</dbReference>
<dbReference type="InterPro" id="IPR002575">
    <property type="entry name" value="Aminoglycoside_PTrfase"/>
</dbReference>
<dbReference type="InterPro" id="IPR011009">
    <property type="entry name" value="Kinase-like_dom_sf"/>
</dbReference>
<dbReference type="InterPro" id="IPR009212">
    <property type="entry name" value="Methylthioribose_kinase"/>
</dbReference>
<dbReference type="NCBIfam" id="TIGR01767">
    <property type="entry name" value="MTRK"/>
    <property type="match status" value="1"/>
</dbReference>
<dbReference type="PANTHER" id="PTHR34273">
    <property type="entry name" value="METHYLTHIORIBOSE KINASE"/>
    <property type="match status" value="1"/>
</dbReference>
<dbReference type="PANTHER" id="PTHR34273:SF2">
    <property type="entry name" value="METHYLTHIORIBOSE KINASE"/>
    <property type="match status" value="1"/>
</dbReference>
<dbReference type="Pfam" id="PF01636">
    <property type="entry name" value="APH"/>
    <property type="match status" value="1"/>
</dbReference>
<dbReference type="PIRSF" id="PIRSF031134">
    <property type="entry name" value="MTRK"/>
    <property type="match status" value="1"/>
</dbReference>
<dbReference type="SUPFAM" id="SSF56112">
    <property type="entry name" value="Protein kinase-like (PK-like)"/>
    <property type="match status" value="1"/>
</dbReference>
<reference key="1">
    <citation type="journal article" date="2007" name="PLoS ONE">
        <title>Paradoxical DNA repair and peroxide resistance gene conservation in Bacillus pumilus SAFR-032.</title>
        <authorList>
            <person name="Gioia J."/>
            <person name="Yerrapragada S."/>
            <person name="Qin X."/>
            <person name="Jiang H."/>
            <person name="Igboeli O.C."/>
            <person name="Muzny D."/>
            <person name="Dugan-Rocha S."/>
            <person name="Ding Y."/>
            <person name="Hawes A."/>
            <person name="Liu W."/>
            <person name="Perez L."/>
            <person name="Kovar C."/>
            <person name="Dinh H."/>
            <person name="Lee S."/>
            <person name="Nazareth L."/>
            <person name="Blyth P."/>
            <person name="Holder M."/>
            <person name="Buhay C."/>
            <person name="Tirumalai M.R."/>
            <person name="Liu Y."/>
            <person name="Dasgupta I."/>
            <person name="Bokhetache L."/>
            <person name="Fujita M."/>
            <person name="Karouia F."/>
            <person name="Eswara Moorthy P."/>
            <person name="Siefert J."/>
            <person name="Uzman A."/>
            <person name="Buzumbo P."/>
            <person name="Verma A."/>
            <person name="Zwiya H."/>
            <person name="McWilliams B.D."/>
            <person name="Olowu A."/>
            <person name="Clinkenbeard K.D."/>
            <person name="Newcombe D."/>
            <person name="Golebiewski L."/>
            <person name="Petrosino J.F."/>
            <person name="Nicholson W.L."/>
            <person name="Fox G.E."/>
            <person name="Venkateswaran K."/>
            <person name="Highlander S.K."/>
            <person name="Weinstock G.M."/>
        </authorList>
    </citation>
    <scope>NUCLEOTIDE SEQUENCE [LARGE SCALE GENOMIC DNA]</scope>
    <source>
        <strain>SAFR-032</strain>
    </source>
</reference>
<keyword id="KW-0028">Amino-acid biosynthesis</keyword>
<keyword id="KW-0067">ATP-binding</keyword>
<keyword id="KW-0418">Kinase</keyword>
<keyword id="KW-0486">Methionine biosynthesis</keyword>
<keyword id="KW-0547">Nucleotide-binding</keyword>
<keyword id="KW-0808">Transferase</keyword>
<organism>
    <name type="scientific">Bacillus pumilus (strain SAFR-032)</name>
    <dbReference type="NCBI Taxonomy" id="315750"/>
    <lineage>
        <taxon>Bacteria</taxon>
        <taxon>Bacillati</taxon>
        <taxon>Bacillota</taxon>
        <taxon>Bacilli</taxon>
        <taxon>Bacillales</taxon>
        <taxon>Bacillaceae</taxon>
        <taxon>Bacillus</taxon>
    </lineage>
</organism>
<comment type="function">
    <text evidence="1">Catalyzes the phosphorylation of methylthioribose into methylthioribose-1-phosphate.</text>
</comment>
<comment type="catalytic activity">
    <reaction evidence="1">
        <text>5-(methylsulfanyl)-D-ribose + ATP = 5-(methylsulfanyl)-alpha-D-ribose 1-phosphate + ADP + H(+)</text>
        <dbReference type="Rhea" id="RHEA:22312"/>
        <dbReference type="ChEBI" id="CHEBI:15378"/>
        <dbReference type="ChEBI" id="CHEBI:30616"/>
        <dbReference type="ChEBI" id="CHEBI:58533"/>
        <dbReference type="ChEBI" id="CHEBI:78440"/>
        <dbReference type="ChEBI" id="CHEBI:456216"/>
        <dbReference type="EC" id="2.7.1.100"/>
    </reaction>
</comment>
<comment type="pathway">
    <text evidence="1">Amino-acid biosynthesis; L-methionine biosynthesis via salvage pathway; S-methyl-5-thio-alpha-D-ribose 1-phosphate from S-methyl-5'-thioadenosine (hydrolase route): step 2/2.</text>
</comment>
<comment type="subunit">
    <text evidence="1">Homodimer.</text>
</comment>
<comment type="similarity">
    <text evidence="1">Belongs to the methylthioribose kinase family.</text>
</comment>
<name>MTNK_BACP2</name>
<gene>
    <name evidence="1" type="primary">mtnK</name>
    <name type="ordered locus">BPUM_1250</name>
</gene>
<feature type="chain" id="PRO_0000357334" description="Methylthioribose kinase">
    <location>
        <begin position="1"/>
        <end position="397"/>
    </location>
</feature>
<feature type="binding site" evidence="1">
    <location>
        <position position="43"/>
    </location>
    <ligand>
        <name>ATP</name>
        <dbReference type="ChEBI" id="CHEBI:30616"/>
    </ligand>
</feature>
<feature type="binding site" evidence="1">
    <location>
        <position position="60"/>
    </location>
    <ligand>
        <name>ATP</name>
        <dbReference type="ChEBI" id="CHEBI:30616"/>
    </ligand>
</feature>
<feature type="binding site" evidence="1">
    <location>
        <begin position="114"/>
        <end position="116"/>
    </location>
    <ligand>
        <name>ATP</name>
        <dbReference type="ChEBI" id="CHEBI:30616"/>
    </ligand>
</feature>
<feature type="binding site" evidence="1">
    <location>
        <position position="232"/>
    </location>
    <ligand>
        <name>substrate</name>
    </ligand>
</feature>
<feature type="binding site" evidence="1">
    <location>
        <begin position="249"/>
        <end position="251"/>
    </location>
    <ligand>
        <name>ATP</name>
        <dbReference type="ChEBI" id="CHEBI:30616"/>
    </ligand>
</feature>
<feature type="binding site" evidence="1">
    <location>
        <position position="340"/>
    </location>
    <ligand>
        <name>substrate</name>
    </ligand>
</feature>
<sequence>MVTLTASYEELTESSAVALAIRLGLIQESSHLTCTEIGDGNLNYVFHIFDHKQEKGLIIKQALPYAKVVGESWPLTLDRARIESAALIKQSEYTPHLVPAVYYSDTALAVTAMEDLSHLEIVRKGLIAGKQYPHLSDHVGEFLGKTLFYTSDFATNPKIKKQFVKQFTNPDLCDITEKLVFTDPFFDSSTNDFEEELREAAEALWADLEVQAKAAELKRIFLTSAETLVHGDLHTGSIFASETETKIIDPEFAFYGPFGFDIGHFIANLFLNALSRENEHDQQHLFDHVVNVWATFKEVFAKAWKEDSIEAFSVSDSFLETTFDRILKEATGFAGCELVRRTIGLAHAADLDAIPSPSKRIQQKKTALTLGKTFIKQYHAVETASDLVALFQQSVKE</sequence>